<sequence>MKYTELKDKSIKELEELLHAKKAELFELRVKLKAMQLSNPNEIKKARRNIARINTAINAHYSSSVE</sequence>
<dbReference type="EMBL" id="AE000511">
    <property type="protein sequence ID" value="AAD08362.1"/>
    <property type="molecule type" value="Genomic_DNA"/>
</dbReference>
<dbReference type="PIR" id="G64683">
    <property type="entry name" value="G64683"/>
</dbReference>
<dbReference type="RefSeq" id="NP_208103.1">
    <property type="nucleotide sequence ID" value="NC_000915.1"/>
</dbReference>
<dbReference type="RefSeq" id="WP_000877884.1">
    <property type="nucleotide sequence ID" value="NC_018939.1"/>
</dbReference>
<dbReference type="SMR" id="P56052"/>
<dbReference type="FunCoup" id="P56052">
    <property type="interactions" value="315"/>
</dbReference>
<dbReference type="IntAct" id="P56052">
    <property type="interactions" value="2"/>
</dbReference>
<dbReference type="STRING" id="85962.HP_1311"/>
<dbReference type="PaxDb" id="85962-C694_06770"/>
<dbReference type="EnsemblBacteria" id="AAD08362">
    <property type="protein sequence ID" value="AAD08362"/>
    <property type="gene ID" value="HP_1311"/>
</dbReference>
<dbReference type="KEGG" id="heo:C694_06770"/>
<dbReference type="KEGG" id="hpy:HP_1311"/>
<dbReference type="PATRIC" id="fig|85962.47.peg.1405"/>
<dbReference type="eggNOG" id="COG0255">
    <property type="taxonomic scope" value="Bacteria"/>
</dbReference>
<dbReference type="InParanoid" id="P56052"/>
<dbReference type="OrthoDB" id="5373225at2"/>
<dbReference type="Proteomes" id="UP000000429">
    <property type="component" value="Chromosome"/>
</dbReference>
<dbReference type="GO" id="GO:0022625">
    <property type="term" value="C:cytosolic large ribosomal subunit"/>
    <property type="evidence" value="ECO:0000318"/>
    <property type="project" value="GO_Central"/>
</dbReference>
<dbReference type="GO" id="GO:0003735">
    <property type="term" value="F:structural constituent of ribosome"/>
    <property type="evidence" value="ECO:0007669"/>
    <property type="project" value="InterPro"/>
</dbReference>
<dbReference type="GO" id="GO:0006412">
    <property type="term" value="P:translation"/>
    <property type="evidence" value="ECO:0007669"/>
    <property type="project" value="UniProtKB-UniRule"/>
</dbReference>
<dbReference type="CDD" id="cd00427">
    <property type="entry name" value="Ribosomal_L29_HIP"/>
    <property type="match status" value="1"/>
</dbReference>
<dbReference type="Gene3D" id="1.10.287.310">
    <property type="match status" value="1"/>
</dbReference>
<dbReference type="HAMAP" id="MF_00374">
    <property type="entry name" value="Ribosomal_uL29"/>
    <property type="match status" value="1"/>
</dbReference>
<dbReference type="InterPro" id="IPR050063">
    <property type="entry name" value="Ribosomal_protein_uL29"/>
</dbReference>
<dbReference type="InterPro" id="IPR001854">
    <property type="entry name" value="Ribosomal_uL29"/>
</dbReference>
<dbReference type="InterPro" id="IPR018254">
    <property type="entry name" value="Ribosomal_uL29_CS"/>
</dbReference>
<dbReference type="InterPro" id="IPR036049">
    <property type="entry name" value="Ribosomal_uL29_sf"/>
</dbReference>
<dbReference type="NCBIfam" id="TIGR00012">
    <property type="entry name" value="L29"/>
    <property type="match status" value="1"/>
</dbReference>
<dbReference type="PANTHER" id="PTHR10916">
    <property type="entry name" value="60S RIBOSOMAL PROTEIN L35/50S RIBOSOMAL PROTEIN L29"/>
    <property type="match status" value="1"/>
</dbReference>
<dbReference type="PANTHER" id="PTHR10916:SF0">
    <property type="entry name" value="LARGE RIBOSOMAL SUBUNIT PROTEIN UL29C"/>
    <property type="match status" value="1"/>
</dbReference>
<dbReference type="Pfam" id="PF00831">
    <property type="entry name" value="Ribosomal_L29"/>
    <property type="match status" value="1"/>
</dbReference>
<dbReference type="SUPFAM" id="SSF46561">
    <property type="entry name" value="Ribosomal protein L29 (L29p)"/>
    <property type="match status" value="1"/>
</dbReference>
<dbReference type="PROSITE" id="PS00579">
    <property type="entry name" value="RIBOSOMAL_L29"/>
    <property type="match status" value="1"/>
</dbReference>
<accession>P56052</accession>
<feature type="chain" id="PRO_0000130400" description="Large ribosomal subunit protein uL29">
    <location>
        <begin position="1"/>
        <end position="66"/>
    </location>
</feature>
<protein>
    <recommendedName>
        <fullName evidence="1">Large ribosomal subunit protein uL29</fullName>
    </recommendedName>
    <alternativeName>
        <fullName>50S ribosomal protein L29</fullName>
    </alternativeName>
</protein>
<organism>
    <name type="scientific">Helicobacter pylori (strain ATCC 700392 / 26695)</name>
    <name type="common">Campylobacter pylori</name>
    <dbReference type="NCBI Taxonomy" id="85962"/>
    <lineage>
        <taxon>Bacteria</taxon>
        <taxon>Pseudomonadati</taxon>
        <taxon>Campylobacterota</taxon>
        <taxon>Epsilonproteobacteria</taxon>
        <taxon>Campylobacterales</taxon>
        <taxon>Helicobacteraceae</taxon>
        <taxon>Helicobacter</taxon>
    </lineage>
</organism>
<name>RL29_HELPY</name>
<comment type="similarity">
    <text evidence="1">Belongs to the universal ribosomal protein uL29 family.</text>
</comment>
<reference key="1">
    <citation type="journal article" date="1997" name="Nature">
        <title>The complete genome sequence of the gastric pathogen Helicobacter pylori.</title>
        <authorList>
            <person name="Tomb J.-F."/>
            <person name="White O."/>
            <person name="Kerlavage A.R."/>
            <person name="Clayton R.A."/>
            <person name="Sutton G.G."/>
            <person name="Fleischmann R.D."/>
            <person name="Ketchum K.A."/>
            <person name="Klenk H.-P."/>
            <person name="Gill S.R."/>
            <person name="Dougherty B.A."/>
            <person name="Nelson K.E."/>
            <person name="Quackenbush J."/>
            <person name="Zhou L."/>
            <person name="Kirkness E.F."/>
            <person name="Peterson S.N."/>
            <person name="Loftus B.J."/>
            <person name="Richardson D.L."/>
            <person name="Dodson R.J."/>
            <person name="Khalak H.G."/>
            <person name="Glodek A."/>
            <person name="McKenney K."/>
            <person name="FitzGerald L.M."/>
            <person name="Lee N."/>
            <person name="Adams M.D."/>
            <person name="Hickey E.K."/>
            <person name="Berg D.E."/>
            <person name="Gocayne J.D."/>
            <person name="Utterback T.R."/>
            <person name="Peterson J.D."/>
            <person name="Kelley J.M."/>
            <person name="Cotton M.D."/>
            <person name="Weidman J.F."/>
            <person name="Fujii C."/>
            <person name="Bowman C."/>
            <person name="Watthey L."/>
            <person name="Wallin E."/>
            <person name="Hayes W.S."/>
            <person name="Borodovsky M."/>
            <person name="Karp P.D."/>
            <person name="Smith H.O."/>
            <person name="Fraser C.M."/>
            <person name="Venter J.C."/>
        </authorList>
    </citation>
    <scope>NUCLEOTIDE SEQUENCE [LARGE SCALE GENOMIC DNA]</scope>
    <source>
        <strain>ATCC 700392 / 26695</strain>
    </source>
</reference>
<evidence type="ECO:0000305" key="1"/>
<gene>
    <name type="primary">rpmC</name>
    <name type="ordered locus">HP_1311</name>
</gene>
<proteinExistence type="inferred from homology"/>
<keyword id="KW-1185">Reference proteome</keyword>
<keyword id="KW-0687">Ribonucleoprotein</keyword>
<keyword id="KW-0689">Ribosomal protein</keyword>